<gene>
    <name type="primary">KCTD21</name>
</gene>
<name>KCD21_HUMAN</name>
<keyword id="KW-0175">Coiled coil</keyword>
<keyword id="KW-0341">Growth regulation</keyword>
<keyword id="KW-1267">Proteomics identification</keyword>
<keyword id="KW-1185">Reference proteome</keyword>
<keyword id="KW-0043">Tumor suppressor</keyword>
<keyword id="KW-0833">Ubl conjugation pathway</keyword>
<comment type="function">
    <text evidence="5">Probable substrate-specific adapter of a BCR (BTB-CUL3-RBX1) E3 ubiquitin-protein ligase complex mediating the ubiquitination and subsequent proteasomal degradation of target proteins. Promotes the ubiquitination of HDAC1. Can function as antagonist of the Hedgehog pathway by affecting the nuclear transfer of transcription factor GLI1; the function probably occurs via HDAC1 down-regulation, keeping GLI1 acetylated and inactive. Inhibits cell growth and tumorigenicity of medulloblastoma (MDB) (PubMed:21472142).</text>
</comment>
<comment type="pathway">
    <text>Protein modification; protein ubiquitination.</text>
</comment>
<comment type="subunit">
    <text evidence="1 2 5 7">Homopentamer (By similarity). Interacts with KCTD11; KCTD21 and KCTD11 may associate in pentameric assemblies. Interacts (via BTB domain) with CUL3; indicative for a participation in a BCR (BTB-CUL3-RBX1) E3 ubiquitin-protein ligase complex (PubMed:21472142).</text>
</comment>
<comment type="interaction">
    <interactant intactId="EBI-11976683">
        <id>Q4G0X4</id>
    </interactant>
    <interactant intactId="EBI-12030460">
        <id>Q8WYQ4-2</id>
        <label>C22orf15</label>
    </interactant>
    <organismsDiffer>false</organismsDiffer>
    <experiments>3</experiments>
</comment>
<comment type="interaction">
    <interactant intactId="EBI-11976683">
        <id>Q4G0X4</id>
    </interactant>
    <interactant intactId="EBI-2872414">
        <id>Q8IUI8</id>
        <label>CRLF3</label>
    </interactant>
    <organismsDiffer>false</organismsDiffer>
    <experiments>3</experiments>
</comment>
<comment type="interaction">
    <interactant intactId="EBI-11976683">
        <id>Q4G0X4</id>
    </interactant>
    <interactant intactId="EBI-11976683">
        <id>Q4G0X4</id>
        <label>KCTD21</label>
    </interactant>
    <organismsDiffer>false</organismsDiffer>
    <experiments>4</experiments>
</comment>
<comment type="interaction">
    <interactant intactId="EBI-11976683">
        <id>Q4G0X4</id>
    </interactant>
    <interactant intactId="EBI-2341787">
        <id>Q17RB8</id>
        <label>LONRF1</label>
    </interactant>
    <organismsDiffer>false</organismsDiffer>
    <experiments>3</experiments>
</comment>
<comment type="interaction">
    <interactant intactId="EBI-11976683">
        <id>Q4G0X4</id>
    </interactant>
    <interactant intactId="EBI-10315485">
        <id>Q9NWW6</id>
        <label>NMRK1</label>
    </interactant>
    <organismsDiffer>false</organismsDiffer>
    <experiments>3</experiments>
</comment>
<comment type="interaction">
    <interactant intactId="EBI-11976683">
        <id>Q4G0X4</id>
    </interactant>
    <interactant intactId="EBI-741158">
        <id>Q96HA8</id>
        <label>NTAQ1</label>
    </interactant>
    <organismsDiffer>false</organismsDiffer>
    <experiments>3</experiments>
</comment>
<comment type="interaction">
    <interactant intactId="EBI-11976683">
        <id>Q4G0X4</id>
    </interactant>
    <interactant intactId="EBI-368321">
        <id>O60437</id>
        <label>PPL</label>
    </interactant>
    <organismsDiffer>false</organismsDiffer>
    <experiments>3</experiments>
</comment>
<comment type="interaction">
    <interactant intactId="EBI-11976683">
        <id>Q4G0X4</id>
    </interactant>
    <interactant intactId="EBI-2129220">
        <id>Q96BH1</id>
        <label>RNF25</label>
    </interactant>
    <organismsDiffer>false</organismsDiffer>
    <experiments>3</experiments>
</comment>
<comment type="interaction">
    <interactant intactId="EBI-11976683">
        <id>Q4G0X4</id>
    </interactant>
    <interactant intactId="EBI-1045061">
        <id>P61960</id>
        <label>UFM1</label>
    </interactant>
    <organismsDiffer>false</organismsDiffer>
    <experiments>3</experiments>
</comment>
<comment type="interaction">
    <interactant intactId="EBI-11976683">
        <id>Q4G0X4</id>
    </interactant>
    <interactant intactId="EBI-746595">
        <id>Q96E35</id>
        <label>ZMYND19</label>
    </interactant>
    <organismsDiffer>false</organismsDiffer>
    <experiments>3</experiments>
</comment>
<comment type="tissue specificity">
    <text evidence="5">Highly expressed in cerebellum and brain. Expression is down-regulated in medulloblastoma.</text>
</comment>
<evidence type="ECO:0000250" key="1">
    <source>
        <dbReference type="UniProtKB" id="Q693B1"/>
    </source>
</evidence>
<evidence type="ECO:0000250" key="2">
    <source>
        <dbReference type="UniProtKB" id="Q8NC69"/>
    </source>
</evidence>
<evidence type="ECO:0000255" key="3"/>
<evidence type="ECO:0000255" key="4">
    <source>
        <dbReference type="PROSITE-ProRule" id="PRU00037"/>
    </source>
</evidence>
<evidence type="ECO:0000269" key="5">
    <source>
    </source>
</evidence>
<evidence type="ECO:0000303" key="6">
    <source>
    </source>
</evidence>
<evidence type="ECO:0000305" key="7"/>
<reference key="1">
    <citation type="journal article" date="2004" name="Nat. Genet.">
        <title>Complete sequencing and characterization of 21,243 full-length human cDNAs.</title>
        <authorList>
            <person name="Ota T."/>
            <person name="Suzuki Y."/>
            <person name="Nishikawa T."/>
            <person name="Otsuki T."/>
            <person name="Sugiyama T."/>
            <person name="Irie R."/>
            <person name="Wakamatsu A."/>
            <person name="Hayashi K."/>
            <person name="Sato H."/>
            <person name="Nagai K."/>
            <person name="Kimura K."/>
            <person name="Makita H."/>
            <person name="Sekine M."/>
            <person name="Obayashi M."/>
            <person name="Nishi T."/>
            <person name="Shibahara T."/>
            <person name="Tanaka T."/>
            <person name="Ishii S."/>
            <person name="Yamamoto J."/>
            <person name="Saito K."/>
            <person name="Kawai Y."/>
            <person name="Isono Y."/>
            <person name="Nakamura Y."/>
            <person name="Nagahari K."/>
            <person name="Murakami K."/>
            <person name="Yasuda T."/>
            <person name="Iwayanagi T."/>
            <person name="Wagatsuma M."/>
            <person name="Shiratori A."/>
            <person name="Sudo H."/>
            <person name="Hosoiri T."/>
            <person name="Kaku Y."/>
            <person name="Kodaira H."/>
            <person name="Kondo H."/>
            <person name="Sugawara M."/>
            <person name="Takahashi M."/>
            <person name="Kanda K."/>
            <person name="Yokoi T."/>
            <person name="Furuya T."/>
            <person name="Kikkawa E."/>
            <person name="Omura Y."/>
            <person name="Abe K."/>
            <person name="Kamihara K."/>
            <person name="Katsuta N."/>
            <person name="Sato K."/>
            <person name="Tanikawa M."/>
            <person name="Yamazaki M."/>
            <person name="Ninomiya K."/>
            <person name="Ishibashi T."/>
            <person name="Yamashita H."/>
            <person name="Murakawa K."/>
            <person name="Fujimori K."/>
            <person name="Tanai H."/>
            <person name="Kimata M."/>
            <person name="Watanabe M."/>
            <person name="Hiraoka S."/>
            <person name="Chiba Y."/>
            <person name="Ishida S."/>
            <person name="Ono Y."/>
            <person name="Takiguchi S."/>
            <person name="Watanabe S."/>
            <person name="Yosida M."/>
            <person name="Hotuta T."/>
            <person name="Kusano J."/>
            <person name="Kanehori K."/>
            <person name="Takahashi-Fujii A."/>
            <person name="Hara H."/>
            <person name="Tanase T.-O."/>
            <person name="Nomura Y."/>
            <person name="Togiya S."/>
            <person name="Komai F."/>
            <person name="Hara R."/>
            <person name="Takeuchi K."/>
            <person name="Arita M."/>
            <person name="Imose N."/>
            <person name="Musashino K."/>
            <person name="Yuuki H."/>
            <person name="Oshima A."/>
            <person name="Sasaki N."/>
            <person name="Aotsuka S."/>
            <person name="Yoshikawa Y."/>
            <person name="Matsunawa H."/>
            <person name="Ichihara T."/>
            <person name="Shiohata N."/>
            <person name="Sano S."/>
            <person name="Moriya S."/>
            <person name="Momiyama H."/>
            <person name="Satoh N."/>
            <person name="Takami S."/>
            <person name="Terashima Y."/>
            <person name="Suzuki O."/>
            <person name="Nakagawa S."/>
            <person name="Senoh A."/>
            <person name="Mizoguchi H."/>
            <person name="Goto Y."/>
            <person name="Shimizu F."/>
            <person name="Wakebe H."/>
            <person name="Hishigaki H."/>
            <person name="Watanabe T."/>
            <person name="Sugiyama A."/>
            <person name="Takemoto M."/>
            <person name="Kawakami B."/>
            <person name="Yamazaki M."/>
            <person name="Watanabe K."/>
            <person name="Kumagai A."/>
            <person name="Itakura S."/>
            <person name="Fukuzumi Y."/>
            <person name="Fujimori Y."/>
            <person name="Komiyama M."/>
            <person name="Tashiro H."/>
            <person name="Tanigami A."/>
            <person name="Fujiwara T."/>
            <person name="Ono T."/>
            <person name="Yamada K."/>
            <person name="Fujii Y."/>
            <person name="Ozaki K."/>
            <person name="Hirao M."/>
            <person name="Ohmori Y."/>
            <person name="Kawabata A."/>
            <person name="Hikiji T."/>
            <person name="Kobatake N."/>
            <person name="Inagaki H."/>
            <person name="Ikema Y."/>
            <person name="Okamoto S."/>
            <person name="Okitani R."/>
            <person name="Kawakami T."/>
            <person name="Noguchi S."/>
            <person name="Itoh T."/>
            <person name="Shigeta K."/>
            <person name="Senba T."/>
            <person name="Matsumura K."/>
            <person name="Nakajima Y."/>
            <person name="Mizuno T."/>
            <person name="Morinaga M."/>
            <person name="Sasaki M."/>
            <person name="Togashi T."/>
            <person name="Oyama M."/>
            <person name="Hata H."/>
            <person name="Watanabe M."/>
            <person name="Komatsu T."/>
            <person name="Mizushima-Sugano J."/>
            <person name="Satoh T."/>
            <person name="Shirai Y."/>
            <person name="Takahashi Y."/>
            <person name="Nakagawa K."/>
            <person name="Okumura K."/>
            <person name="Nagase T."/>
            <person name="Nomura N."/>
            <person name="Kikuchi H."/>
            <person name="Masuho Y."/>
            <person name="Yamashita R."/>
            <person name="Nakai K."/>
            <person name="Yada T."/>
            <person name="Nakamura Y."/>
            <person name="Ohara O."/>
            <person name="Isogai T."/>
            <person name="Sugano S."/>
        </authorList>
    </citation>
    <scope>NUCLEOTIDE SEQUENCE [LARGE SCALE MRNA]</scope>
    <source>
        <tissue>Placenta</tissue>
    </source>
</reference>
<reference key="2">
    <citation type="journal article" date="2004" name="Genome Res.">
        <title>The status, quality, and expansion of the NIH full-length cDNA project: the Mammalian Gene Collection (MGC).</title>
        <authorList>
            <consortium name="The MGC Project Team"/>
        </authorList>
    </citation>
    <scope>NUCLEOTIDE SEQUENCE [LARGE SCALE MRNA]</scope>
    <source>
        <tissue>Brain</tissue>
    </source>
</reference>
<reference key="3">
    <citation type="journal article" date="2011" name="Neoplasia">
        <title>Identification and characterization of KCASH2 and KCASH3, 2 novel Cullin3 adaptors suppressing histone deacetylase and Hedgehog activity in medulloblastoma.</title>
        <authorList>
            <person name="De Smaele E."/>
            <person name="Di Marcotullio L."/>
            <person name="Moretti M."/>
            <person name="Pelloni M."/>
            <person name="Occhione M.A."/>
            <person name="Infante P."/>
            <person name="Cucchi D."/>
            <person name="Greco A."/>
            <person name="Pietrosanti L."/>
            <person name="Todorovic J."/>
            <person name="Coni S."/>
            <person name="Canettieri G."/>
            <person name="Ferretti E."/>
            <person name="Bei R."/>
            <person name="Maroder M."/>
            <person name="Screpanti I."/>
            <person name="Gulino A."/>
        </authorList>
    </citation>
    <scope>SUBUNIT</scope>
    <scope>FUNCTION</scope>
    <scope>TISSUE SPECIFICITY</scope>
    <scope>MUTAGENESIS OF 85-ASP--TYR-87</scope>
</reference>
<reference key="4">
    <citation type="journal article" date="2014" name="J. Proteomics">
        <title>An enzyme assisted RP-RPLC approach for in-depth analysis of human liver phosphoproteome.</title>
        <authorList>
            <person name="Bian Y."/>
            <person name="Song C."/>
            <person name="Cheng K."/>
            <person name="Dong M."/>
            <person name="Wang F."/>
            <person name="Huang J."/>
            <person name="Sun D."/>
            <person name="Wang L."/>
            <person name="Ye M."/>
            <person name="Zou H."/>
        </authorList>
    </citation>
    <scope>IDENTIFICATION BY MASS SPECTROMETRY [LARGE SCALE ANALYSIS]</scope>
    <source>
        <tissue>Liver</tissue>
    </source>
</reference>
<sequence>MSDPITLNVGGKLYTTSLATLTSFPDSMLGAMFSGKMPTKRDSQGNCFIDRDGKVFRYILNFLRTSHLDLPEDFQEMGLLRREADFYQVQPLIEALQEKEVELSKAEKNAMLNITLNQRVQTVHFTVREAPQIYSLSSSSMEVFNANIFSTSCLFLKLLGSKLFYCSNGNLSSITSHLQDPNHLTLDWVANVEGLPEEEYTKQNLKRLWVVPANKQINSFQVFVEEVLKIALSDGFCIDSSHPHALDFMNNKIIRLIRYR</sequence>
<protein>
    <recommendedName>
        <fullName>BTB/POZ domain-containing protein KCTD21</fullName>
    </recommendedName>
    <alternativeName>
        <fullName evidence="6">KCASH2 protein</fullName>
    </alternativeName>
    <alternativeName>
        <fullName>Potassium channel tetramerization domain-containing protein 21</fullName>
    </alternativeName>
</protein>
<feature type="chain" id="PRO_0000281151" description="BTB/POZ domain-containing protein KCTD21">
    <location>
        <begin position="1"/>
        <end position="260"/>
    </location>
</feature>
<feature type="domain" description="BTB" evidence="4">
    <location>
        <begin position="3"/>
        <end position="72"/>
    </location>
</feature>
<feature type="coiled-coil region" evidence="3">
    <location>
        <begin position="88"/>
        <end position="112"/>
    </location>
</feature>
<feature type="mutagenesis site" description="Abolishes interaction with CUL3." evidence="5">
    <original>DFY</original>
    <variation>KKK</variation>
    <location>
        <begin position="85"/>
        <end position="87"/>
    </location>
</feature>
<feature type="sequence conflict" description="In Ref. 1; BAG62072." evidence="7" ref="1">
    <original>S</original>
    <variation>P</variation>
    <location>
        <position position="152"/>
    </location>
</feature>
<dbReference type="EMBL" id="AK300320">
    <property type="protein sequence ID" value="BAG62072.1"/>
    <property type="molecule type" value="mRNA"/>
</dbReference>
<dbReference type="EMBL" id="BC036058">
    <property type="protein sequence ID" value="AAH36058.1"/>
    <property type="molecule type" value="mRNA"/>
</dbReference>
<dbReference type="CCDS" id="CCDS31645.1"/>
<dbReference type="RefSeq" id="NP_001025030.1">
    <property type="nucleotide sequence ID" value="NM_001029859.3"/>
</dbReference>
<dbReference type="RefSeq" id="XP_005273985.1">
    <property type="nucleotide sequence ID" value="XM_005273928.1"/>
</dbReference>
<dbReference type="RefSeq" id="XP_006718580.1">
    <property type="nucleotide sequence ID" value="XM_006718517.3"/>
</dbReference>
<dbReference type="RefSeq" id="XP_006718581.1">
    <property type="nucleotide sequence ID" value="XM_006718518.4"/>
</dbReference>
<dbReference type="RefSeq" id="XP_011543257.1">
    <property type="nucleotide sequence ID" value="XM_011544955.2"/>
</dbReference>
<dbReference type="RefSeq" id="XP_054224456.1">
    <property type="nucleotide sequence ID" value="XM_054368481.1"/>
</dbReference>
<dbReference type="RefSeq" id="XP_054224458.1">
    <property type="nucleotide sequence ID" value="XM_054368483.1"/>
</dbReference>
<dbReference type="SMR" id="Q4G0X4"/>
<dbReference type="BioGRID" id="129500">
    <property type="interactions" value="34"/>
</dbReference>
<dbReference type="FunCoup" id="Q4G0X4">
    <property type="interactions" value="204"/>
</dbReference>
<dbReference type="IntAct" id="Q4G0X4">
    <property type="interactions" value="25"/>
</dbReference>
<dbReference type="STRING" id="9606.ENSP00000339340"/>
<dbReference type="GlyGen" id="Q4G0X4">
    <property type="glycosylation" value="1 site, 1 O-linked glycan (1 site)"/>
</dbReference>
<dbReference type="iPTMnet" id="Q4G0X4"/>
<dbReference type="PhosphoSitePlus" id="Q4G0X4"/>
<dbReference type="BioMuta" id="KCTD21"/>
<dbReference type="DMDM" id="121943921"/>
<dbReference type="jPOST" id="Q4G0X4"/>
<dbReference type="MassIVE" id="Q4G0X4"/>
<dbReference type="PaxDb" id="9606-ENSP00000339340"/>
<dbReference type="PeptideAtlas" id="Q4G0X4"/>
<dbReference type="ProteomicsDB" id="62137"/>
<dbReference type="Pumba" id="Q4G0X4"/>
<dbReference type="Antibodypedia" id="31300">
    <property type="antibodies" value="96 antibodies from 19 providers"/>
</dbReference>
<dbReference type="DNASU" id="283219"/>
<dbReference type="Ensembl" id="ENST00000340067.4">
    <property type="protein sequence ID" value="ENSP00000339340.3"/>
    <property type="gene ID" value="ENSG00000188997.8"/>
</dbReference>
<dbReference type="GeneID" id="283219"/>
<dbReference type="KEGG" id="hsa:283219"/>
<dbReference type="MANE-Select" id="ENST00000340067.4">
    <property type="protein sequence ID" value="ENSP00000339340.3"/>
    <property type="RefSeq nucleotide sequence ID" value="NM_001029859.3"/>
    <property type="RefSeq protein sequence ID" value="NP_001025030.1"/>
</dbReference>
<dbReference type="UCSC" id="uc001ozb.4">
    <property type="organism name" value="human"/>
</dbReference>
<dbReference type="AGR" id="HGNC:27452"/>
<dbReference type="CTD" id="283219"/>
<dbReference type="DisGeNET" id="283219"/>
<dbReference type="GeneCards" id="KCTD21"/>
<dbReference type="HGNC" id="HGNC:27452">
    <property type="gene designation" value="KCTD21"/>
</dbReference>
<dbReference type="HPA" id="ENSG00000188997">
    <property type="expression patterns" value="Low tissue specificity"/>
</dbReference>
<dbReference type="MIM" id="618790">
    <property type="type" value="gene"/>
</dbReference>
<dbReference type="neXtProt" id="NX_Q4G0X4"/>
<dbReference type="OpenTargets" id="ENSG00000188997"/>
<dbReference type="PharmGKB" id="PA145148689"/>
<dbReference type="VEuPathDB" id="HostDB:ENSG00000188997"/>
<dbReference type="eggNOG" id="KOG2723">
    <property type="taxonomic scope" value="Eukaryota"/>
</dbReference>
<dbReference type="GeneTree" id="ENSGT00940000160906"/>
<dbReference type="HOGENOM" id="CLU_088122_0_0_1"/>
<dbReference type="InParanoid" id="Q4G0X4"/>
<dbReference type="OMA" id="ANIFCTS"/>
<dbReference type="OrthoDB" id="2414723at2759"/>
<dbReference type="PAN-GO" id="Q4G0X4">
    <property type="GO annotations" value="3 GO annotations based on evolutionary models"/>
</dbReference>
<dbReference type="PhylomeDB" id="Q4G0X4"/>
<dbReference type="TreeFam" id="TF315332"/>
<dbReference type="PathwayCommons" id="Q4G0X4"/>
<dbReference type="SignaLink" id="Q4G0X4"/>
<dbReference type="UniPathway" id="UPA00143"/>
<dbReference type="BioGRID-ORCS" id="283219">
    <property type="hits" value="17 hits in 1156 CRISPR screens"/>
</dbReference>
<dbReference type="ChiTaRS" id="KCTD21">
    <property type="organism name" value="human"/>
</dbReference>
<dbReference type="GenomeRNAi" id="283219"/>
<dbReference type="Pharos" id="Q4G0X4">
    <property type="development level" value="Tbio"/>
</dbReference>
<dbReference type="PRO" id="PR:Q4G0X4"/>
<dbReference type="Proteomes" id="UP000005640">
    <property type="component" value="Chromosome 11"/>
</dbReference>
<dbReference type="RNAct" id="Q4G0X4">
    <property type="molecule type" value="protein"/>
</dbReference>
<dbReference type="Bgee" id="ENSG00000188997">
    <property type="expression patterns" value="Expressed in cardiac muscle of right atrium and 171 other cell types or tissues"/>
</dbReference>
<dbReference type="ExpressionAtlas" id="Q4G0X4">
    <property type="expression patterns" value="baseline and differential"/>
</dbReference>
<dbReference type="GO" id="GO:0097602">
    <property type="term" value="F:cullin family protein binding"/>
    <property type="evidence" value="ECO:0000314"/>
    <property type="project" value="UniProtKB"/>
</dbReference>
<dbReference type="GO" id="GO:0042826">
    <property type="term" value="F:histone deacetylase binding"/>
    <property type="evidence" value="ECO:0000314"/>
    <property type="project" value="UniProtKB"/>
</dbReference>
<dbReference type="GO" id="GO:0042802">
    <property type="term" value="F:identical protein binding"/>
    <property type="evidence" value="ECO:0000353"/>
    <property type="project" value="IntAct"/>
</dbReference>
<dbReference type="GO" id="GO:0045879">
    <property type="term" value="P:negative regulation of smoothened signaling pathway"/>
    <property type="evidence" value="ECO:0000314"/>
    <property type="project" value="UniProtKB"/>
</dbReference>
<dbReference type="GO" id="GO:0051260">
    <property type="term" value="P:protein homooligomerization"/>
    <property type="evidence" value="ECO:0007669"/>
    <property type="project" value="InterPro"/>
</dbReference>
<dbReference type="GO" id="GO:0016567">
    <property type="term" value="P:protein ubiquitination"/>
    <property type="evidence" value="ECO:0007669"/>
    <property type="project" value="UniProtKB-UniPathway"/>
</dbReference>
<dbReference type="GO" id="GO:0006511">
    <property type="term" value="P:ubiquitin-dependent protein catabolic process"/>
    <property type="evidence" value="ECO:0000314"/>
    <property type="project" value="UniProtKB"/>
</dbReference>
<dbReference type="CDD" id="cd18395">
    <property type="entry name" value="BTB_POZ_KCTD21"/>
    <property type="match status" value="1"/>
</dbReference>
<dbReference type="FunFam" id="3.30.710.10:FF:000003">
    <property type="entry name" value="BTB/POZ domain-containing protein KCTD6 isoform X2"/>
    <property type="match status" value="1"/>
</dbReference>
<dbReference type="Gene3D" id="3.30.710.10">
    <property type="entry name" value="Potassium Channel Kv1.1, Chain A"/>
    <property type="match status" value="1"/>
</dbReference>
<dbReference type="InterPro" id="IPR000210">
    <property type="entry name" value="BTB/POZ_dom"/>
</dbReference>
<dbReference type="InterPro" id="IPR045763">
    <property type="entry name" value="KCTD11/21_C"/>
</dbReference>
<dbReference type="InterPro" id="IPR011333">
    <property type="entry name" value="SKP1/BTB/POZ_sf"/>
</dbReference>
<dbReference type="InterPro" id="IPR003131">
    <property type="entry name" value="T1-type_BTB"/>
</dbReference>
<dbReference type="PANTHER" id="PTHR14499:SF57">
    <property type="entry name" value="BTB_POZ DOMAIN-CONTAINING PROTEIN KCTD21"/>
    <property type="match status" value="1"/>
</dbReference>
<dbReference type="PANTHER" id="PTHR14499">
    <property type="entry name" value="POTASSIUM CHANNEL TETRAMERIZATION DOMAIN-CONTAINING"/>
    <property type="match status" value="1"/>
</dbReference>
<dbReference type="Pfam" id="PF02214">
    <property type="entry name" value="BTB_2"/>
    <property type="match status" value="1"/>
</dbReference>
<dbReference type="Pfam" id="PF19329">
    <property type="entry name" value="KCTD11_21_C"/>
    <property type="match status" value="1"/>
</dbReference>
<dbReference type="SMART" id="SM00225">
    <property type="entry name" value="BTB"/>
    <property type="match status" value="1"/>
</dbReference>
<dbReference type="SUPFAM" id="SSF54695">
    <property type="entry name" value="POZ domain"/>
    <property type="match status" value="1"/>
</dbReference>
<dbReference type="PROSITE" id="PS50097">
    <property type="entry name" value="BTB"/>
    <property type="match status" value="1"/>
</dbReference>
<accession>Q4G0X4</accession>
<accession>B4DTR0</accession>
<proteinExistence type="evidence at protein level"/>
<organism>
    <name type="scientific">Homo sapiens</name>
    <name type="common">Human</name>
    <dbReference type="NCBI Taxonomy" id="9606"/>
    <lineage>
        <taxon>Eukaryota</taxon>
        <taxon>Metazoa</taxon>
        <taxon>Chordata</taxon>
        <taxon>Craniata</taxon>
        <taxon>Vertebrata</taxon>
        <taxon>Euteleostomi</taxon>
        <taxon>Mammalia</taxon>
        <taxon>Eutheria</taxon>
        <taxon>Euarchontoglires</taxon>
        <taxon>Primates</taxon>
        <taxon>Haplorrhini</taxon>
        <taxon>Catarrhini</taxon>
        <taxon>Hominidae</taxon>
        <taxon>Homo</taxon>
    </lineage>
</organism>